<accession>Q8P1H9</accession>
<name>PEPT_STRP8</name>
<dbReference type="EC" id="3.4.11.4" evidence="1"/>
<dbReference type="EMBL" id="AE009949">
    <property type="protein sequence ID" value="AAL97515.1"/>
    <property type="molecule type" value="Genomic_DNA"/>
</dbReference>
<dbReference type="RefSeq" id="WP_011017635.1">
    <property type="nucleotide sequence ID" value="NC_003485.1"/>
</dbReference>
<dbReference type="SMR" id="Q8P1H9"/>
<dbReference type="MEROPS" id="M20.003"/>
<dbReference type="KEGG" id="spm:spyM18_0861"/>
<dbReference type="HOGENOM" id="CLU_053676_0_0_9"/>
<dbReference type="GO" id="GO:0005829">
    <property type="term" value="C:cytosol"/>
    <property type="evidence" value="ECO:0007669"/>
    <property type="project" value="TreeGrafter"/>
</dbReference>
<dbReference type="GO" id="GO:0008237">
    <property type="term" value="F:metallopeptidase activity"/>
    <property type="evidence" value="ECO:0007669"/>
    <property type="project" value="UniProtKB-KW"/>
</dbReference>
<dbReference type="GO" id="GO:0045148">
    <property type="term" value="F:tripeptide aminopeptidase activity"/>
    <property type="evidence" value="ECO:0007669"/>
    <property type="project" value="UniProtKB-UniRule"/>
</dbReference>
<dbReference type="GO" id="GO:0008270">
    <property type="term" value="F:zinc ion binding"/>
    <property type="evidence" value="ECO:0007669"/>
    <property type="project" value="UniProtKB-UniRule"/>
</dbReference>
<dbReference type="GO" id="GO:0043171">
    <property type="term" value="P:peptide catabolic process"/>
    <property type="evidence" value="ECO:0007669"/>
    <property type="project" value="UniProtKB-UniRule"/>
</dbReference>
<dbReference type="GO" id="GO:0006508">
    <property type="term" value="P:proteolysis"/>
    <property type="evidence" value="ECO:0007669"/>
    <property type="project" value="UniProtKB-UniRule"/>
</dbReference>
<dbReference type="CDD" id="cd03892">
    <property type="entry name" value="M20_peptT"/>
    <property type="match status" value="1"/>
</dbReference>
<dbReference type="FunFam" id="3.30.70.360:FF:000002">
    <property type="entry name" value="Peptidase T"/>
    <property type="match status" value="1"/>
</dbReference>
<dbReference type="Gene3D" id="3.30.70.360">
    <property type="match status" value="1"/>
</dbReference>
<dbReference type="Gene3D" id="3.40.630.10">
    <property type="entry name" value="Zn peptidases"/>
    <property type="match status" value="1"/>
</dbReference>
<dbReference type="HAMAP" id="MF_00550">
    <property type="entry name" value="Aminopeptidase_M20"/>
    <property type="match status" value="1"/>
</dbReference>
<dbReference type="InterPro" id="IPR001261">
    <property type="entry name" value="ArgE/DapE_CS"/>
</dbReference>
<dbReference type="InterPro" id="IPR036264">
    <property type="entry name" value="Bact_exopeptidase_dim_dom"/>
</dbReference>
<dbReference type="InterPro" id="IPR002933">
    <property type="entry name" value="Peptidase_M20"/>
</dbReference>
<dbReference type="InterPro" id="IPR011650">
    <property type="entry name" value="Peptidase_M20_dimer"/>
</dbReference>
<dbReference type="InterPro" id="IPR010161">
    <property type="entry name" value="Peptidase_M20B"/>
</dbReference>
<dbReference type="NCBIfam" id="TIGR01882">
    <property type="entry name" value="peptidase-T"/>
    <property type="match status" value="1"/>
</dbReference>
<dbReference type="NCBIfam" id="NF003976">
    <property type="entry name" value="PRK05469.1"/>
    <property type="match status" value="1"/>
</dbReference>
<dbReference type="NCBIfam" id="NF009920">
    <property type="entry name" value="PRK13381.1"/>
    <property type="match status" value="1"/>
</dbReference>
<dbReference type="PANTHER" id="PTHR42994">
    <property type="entry name" value="PEPTIDASE T"/>
    <property type="match status" value="1"/>
</dbReference>
<dbReference type="PANTHER" id="PTHR42994:SF1">
    <property type="entry name" value="PEPTIDASE T"/>
    <property type="match status" value="1"/>
</dbReference>
<dbReference type="Pfam" id="PF07687">
    <property type="entry name" value="M20_dimer"/>
    <property type="match status" value="1"/>
</dbReference>
<dbReference type="Pfam" id="PF01546">
    <property type="entry name" value="Peptidase_M20"/>
    <property type="match status" value="1"/>
</dbReference>
<dbReference type="PIRSF" id="PIRSF037215">
    <property type="entry name" value="Peptidase_M20B"/>
    <property type="match status" value="1"/>
</dbReference>
<dbReference type="SUPFAM" id="SSF55031">
    <property type="entry name" value="Bacterial exopeptidase dimerisation domain"/>
    <property type="match status" value="1"/>
</dbReference>
<dbReference type="SUPFAM" id="SSF53187">
    <property type="entry name" value="Zn-dependent exopeptidases"/>
    <property type="match status" value="1"/>
</dbReference>
<dbReference type="PROSITE" id="PS00758">
    <property type="entry name" value="ARGE_DAPE_CPG2_1"/>
    <property type="match status" value="1"/>
</dbReference>
<dbReference type="PROSITE" id="PS00759">
    <property type="entry name" value="ARGE_DAPE_CPG2_2"/>
    <property type="match status" value="1"/>
</dbReference>
<feature type="chain" id="PRO_0000185323" description="Peptidase T">
    <location>
        <begin position="1"/>
        <end position="407"/>
    </location>
</feature>
<feature type="active site" evidence="1">
    <location>
        <position position="84"/>
    </location>
</feature>
<feature type="active site" description="Proton acceptor" evidence="1">
    <location>
        <position position="177"/>
    </location>
</feature>
<feature type="binding site" evidence="1">
    <location>
        <position position="82"/>
    </location>
    <ligand>
        <name>Zn(2+)</name>
        <dbReference type="ChEBI" id="CHEBI:29105"/>
        <label>1</label>
    </ligand>
</feature>
<feature type="binding site" evidence="1">
    <location>
        <position position="143"/>
    </location>
    <ligand>
        <name>Zn(2+)</name>
        <dbReference type="ChEBI" id="CHEBI:29105"/>
        <label>1</label>
    </ligand>
</feature>
<feature type="binding site" evidence="1">
    <location>
        <position position="143"/>
    </location>
    <ligand>
        <name>Zn(2+)</name>
        <dbReference type="ChEBI" id="CHEBI:29105"/>
        <label>2</label>
    </ligand>
</feature>
<feature type="binding site" evidence="1">
    <location>
        <position position="178"/>
    </location>
    <ligand>
        <name>Zn(2+)</name>
        <dbReference type="ChEBI" id="CHEBI:29105"/>
        <label>2</label>
    </ligand>
</feature>
<feature type="binding site" evidence="1">
    <location>
        <position position="200"/>
    </location>
    <ligand>
        <name>Zn(2+)</name>
        <dbReference type="ChEBI" id="CHEBI:29105"/>
        <label>1</label>
    </ligand>
</feature>
<feature type="binding site" evidence="1">
    <location>
        <position position="382"/>
    </location>
    <ligand>
        <name>Zn(2+)</name>
        <dbReference type="ChEBI" id="CHEBI:29105"/>
        <label>2</label>
    </ligand>
</feature>
<proteinExistence type="inferred from homology"/>
<reference key="1">
    <citation type="journal article" date="2002" name="Proc. Natl. Acad. Sci. U.S.A.">
        <title>Genome sequence and comparative microarray analysis of serotype M18 group A Streptococcus strains associated with acute rheumatic fever outbreaks.</title>
        <authorList>
            <person name="Smoot J.C."/>
            <person name="Barbian K.D."/>
            <person name="Van Gompel J.J."/>
            <person name="Smoot L.M."/>
            <person name="Chaussee M.S."/>
            <person name="Sylva G.L."/>
            <person name="Sturdevant D.E."/>
            <person name="Ricklefs S.M."/>
            <person name="Porcella S.F."/>
            <person name="Parkins L.D."/>
            <person name="Beres S.B."/>
            <person name="Campbell D.S."/>
            <person name="Smith T.M."/>
            <person name="Zhang Q."/>
            <person name="Kapur V."/>
            <person name="Daly J.A."/>
            <person name="Veasy L.G."/>
            <person name="Musser J.M."/>
        </authorList>
    </citation>
    <scope>NUCLEOTIDE SEQUENCE [LARGE SCALE GENOMIC DNA]</scope>
    <source>
        <strain>MGAS8232</strain>
    </source>
</reference>
<sequence length="407" mass="45014">MKYDNLLDRFIKYVKVNTRSDPDSETTPSTESQEAFALTILKPEMEAIGLQDVHYNPVNGYLIGTLPANNPTLTRKIGFIAHMDTADFNADNVNPQIIDNYQGGDITLGSSNYKLDPKAFPNLNNYIGQTLITTDGTTLLGADDKSGIAEIMTAIEFLTSQPQIEHCDIKVAFGPDEEIGVGADKFEVADFEVDFAYTMDGGPLGELQYETFSAAALEVTFLGRNVHPGTAKDQMINALQLAIDFHEKLPAKERPEYTDGYQGFYHLTGLTGTVEEARASYIIRDFEEASFEARKVKVENIAQSMNAQLGTKRVLVELNDQYYNMKKVIEKDMTAIELAKEVMEELTIKPVIEPIRGGTDGSKISFMGIPTPNIFAGGENMHGRFEFVSLQTMERAVDVIIGLVCKA</sequence>
<organism>
    <name type="scientific">Streptococcus pyogenes serotype M18 (strain MGAS8232)</name>
    <dbReference type="NCBI Taxonomy" id="186103"/>
    <lineage>
        <taxon>Bacteria</taxon>
        <taxon>Bacillati</taxon>
        <taxon>Bacillota</taxon>
        <taxon>Bacilli</taxon>
        <taxon>Lactobacillales</taxon>
        <taxon>Streptococcaceae</taxon>
        <taxon>Streptococcus</taxon>
    </lineage>
</organism>
<evidence type="ECO:0000255" key="1">
    <source>
        <dbReference type="HAMAP-Rule" id="MF_00550"/>
    </source>
</evidence>
<protein>
    <recommendedName>
        <fullName evidence="1">Peptidase T</fullName>
        <ecNumber evidence="1">3.4.11.4</ecNumber>
    </recommendedName>
    <alternativeName>
        <fullName evidence="1">Aminotripeptidase</fullName>
        <shortName evidence="1">Tripeptidase</shortName>
    </alternativeName>
    <alternativeName>
        <fullName evidence="1">Tripeptide aminopeptidase</fullName>
    </alternativeName>
</protein>
<keyword id="KW-0031">Aminopeptidase</keyword>
<keyword id="KW-0963">Cytoplasm</keyword>
<keyword id="KW-0378">Hydrolase</keyword>
<keyword id="KW-0479">Metal-binding</keyword>
<keyword id="KW-0482">Metalloprotease</keyword>
<keyword id="KW-0645">Protease</keyword>
<keyword id="KW-0862">Zinc</keyword>
<gene>
    <name evidence="1" type="primary">pepT</name>
    <name type="ordered locus">spyM18_0861</name>
</gene>
<comment type="function">
    <text evidence="1">Cleaves the N-terminal amino acid of tripeptides.</text>
</comment>
<comment type="catalytic activity">
    <reaction evidence="1">
        <text>Release of the N-terminal residue from a tripeptide.</text>
        <dbReference type="EC" id="3.4.11.4"/>
    </reaction>
</comment>
<comment type="cofactor">
    <cofactor evidence="1">
        <name>Zn(2+)</name>
        <dbReference type="ChEBI" id="CHEBI:29105"/>
    </cofactor>
    <text evidence="1">Binds 2 Zn(2+) ions per subunit.</text>
</comment>
<comment type="subcellular location">
    <subcellularLocation>
        <location evidence="1">Cytoplasm</location>
    </subcellularLocation>
</comment>
<comment type="similarity">
    <text evidence="1">Belongs to the peptidase M20B family.</text>
</comment>